<name>PA2A3_BUNMU</name>
<comment type="function">
    <text>Snake venom phospholipase A2 (PLA2) that inhibits neuromuscular transmission by blocking acetylcholine release from the nerve termini. PLA2 catalyzes the calcium-dependent hydrolysis of the 2-acyl groups in 3-sn-phosphoglycerides.</text>
</comment>
<comment type="catalytic activity">
    <reaction evidence="4 5">
        <text>a 1,2-diacyl-sn-glycero-3-phosphocholine + H2O = a 1-acyl-sn-glycero-3-phosphocholine + a fatty acid + H(+)</text>
        <dbReference type="Rhea" id="RHEA:15801"/>
        <dbReference type="ChEBI" id="CHEBI:15377"/>
        <dbReference type="ChEBI" id="CHEBI:15378"/>
        <dbReference type="ChEBI" id="CHEBI:28868"/>
        <dbReference type="ChEBI" id="CHEBI:57643"/>
        <dbReference type="ChEBI" id="CHEBI:58168"/>
        <dbReference type="EC" id="3.1.1.4"/>
    </reaction>
</comment>
<comment type="cofactor">
    <cofactor evidence="1">
        <name>Ca(2+)</name>
        <dbReference type="ChEBI" id="CHEBI:29108"/>
    </cofactor>
    <text evidence="1">Binds 1 Ca(2+) ion.</text>
</comment>
<comment type="subunit">
    <text evidence="6">Heterodimer; disulfide-linked. The A chains have phospholipase A2 activity and the B chains show homology with the basic protease inhibitors. The A3 chain is found in beta-5 bungarotoxins.</text>
</comment>
<comment type="subcellular location">
    <subcellularLocation>
        <location evidence="6">Secreted</location>
    </subcellularLocation>
</comment>
<comment type="tissue specificity">
    <text evidence="8">Expressed by the venom gland.</text>
</comment>
<comment type="toxic dose">
    <text evidence="6">LD(50) is 0.13 mg/kg by intraperitoneal injection into mice.</text>
</comment>
<comment type="miscellaneous">
    <text>The A3 chain is found in beta-5 bungarotoxin.</text>
</comment>
<comment type="similarity">
    <text evidence="7">Belongs to the phospholipase A2 family. Group I subfamily. D49 sub-subfamily.</text>
</comment>
<evidence type="ECO:0000250" key="1">
    <source>
        <dbReference type="UniProtKB" id="P00617"/>
    </source>
</evidence>
<evidence type="ECO:0000250" key="2">
    <source>
        <dbReference type="UniProtKB" id="P14418"/>
    </source>
</evidence>
<evidence type="ECO:0000255" key="3"/>
<evidence type="ECO:0000255" key="4">
    <source>
        <dbReference type="PROSITE-ProRule" id="PRU10035"/>
    </source>
</evidence>
<evidence type="ECO:0000255" key="5">
    <source>
        <dbReference type="PROSITE-ProRule" id="PRU10036"/>
    </source>
</evidence>
<evidence type="ECO:0000269" key="6">
    <source>
    </source>
</evidence>
<evidence type="ECO:0000305" key="7"/>
<evidence type="ECO:0000305" key="8">
    <source>
    </source>
</evidence>
<accession>P00619</accession>
<accession>Q9DET8</accession>
<accession>Q9PU96</accession>
<dbReference type="EC" id="3.1.1.4"/>
<dbReference type="EMBL" id="AJ223249">
    <property type="protein sequence ID" value="CAC08197.1"/>
    <property type="molecule type" value="mRNA"/>
</dbReference>
<dbReference type="EMBL" id="AJ242013">
    <property type="protein sequence ID" value="CAB62385.1"/>
    <property type="molecule type" value="mRNA"/>
</dbReference>
<dbReference type="SMR" id="P00619"/>
<dbReference type="GO" id="GO:0005576">
    <property type="term" value="C:extracellular region"/>
    <property type="evidence" value="ECO:0007669"/>
    <property type="project" value="UniProtKB-SubCell"/>
</dbReference>
<dbReference type="GO" id="GO:0005509">
    <property type="term" value="F:calcium ion binding"/>
    <property type="evidence" value="ECO:0007669"/>
    <property type="project" value="InterPro"/>
</dbReference>
<dbReference type="GO" id="GO:0047498">
    <property type="term" value="F:calcium-dependent phospholipase A2 activity"/>
    <property type="evidence" value="ECO:0007669"/>
    <property type="project" value="TreeGrafter"/>
</dbReference>
<dbReference type="GO" id="GO:0005543">
    <property type="term" value="F:phospholipid binding"/>
    <property type="evidence" value="ECO:0007669"/>
    <property type="project" value="TreeGrafter"/>
</dbReference>
<dbReference type="GO" id="GO:0090729">
    <property type="term" value="F:toxin activity"/>
    <property type="evidence" value="ECO:0007669"/>
    <property type="project" value="UniProtKB-KW"/>
</dbReference>
<dbReference type="GO" id="GO:0050482">
    <property type="term" value="P:arachidonate secretion"/>
    <property type="evidence" value="ECO:0007669"/>
    <property type="project" value="InterPro"/>
</dbReference>
<dbReference type="GO" id="GO:0016042">
    <property type="term" value="P:lipid catabolic process"/>
    <property type="evidence" value="ECO:0007669"/>
    <property type="project" value="UniProtKB-KW"/>
</dbReference>
<dbReference type="GO" id="GO:0006644">
    <property type="term" value="P:phospholipid metabolic process"/>
    <property type="evidence" value="ECO:0007669"/>
    <property type="project" value="InterPro"/>
</dbReference>
<dbReference type="CDD" id="cd00125">
    <property type="entry name" value="PLA2c"/>
    <property type="match status" value="1"/>
</dbReference>
<dbReference type="FunFam" id="1.20.90.10:FF:000007">
    <property type="entry name" value="Acidic phospholipase A2"/>
    <property type="match status" value="1"/>
</dbReference>
<dbReference type="Gene3D" id="1.20.90.10">
    <property type="entry name" value="Phospholipase A2 domain"/>
    <property type="match status" value="1"/>
</dbReference>
<dbReference type="InterPro" id="IPR001211">
    <property type="entry name" value="PLipase_A2"/>
</dbReference>
<dbReference type="InterPro" id="IPR033112">
    <property type="entry name" value="PLipase_A2_Asp_AS"/>
</dbReference>
<dbReference type="InterPro" id="IPR016090">
    <property type="entry name" value="PLipase_A2_dom"/>
</dbReference>
<dbReference type="InterPro" id="IPR036444">
    <property type="entry name" value="PLipase_A2_dom_sf"/>
</dbReference>
<dbReference type="InterPro" id="IPR033113">
    <property type="entry name" value="PLipase_A2_His_AS"/>
</dbReference>
<dbReference type="PANTHER" id="PTHR11716:SF100">
    <property type="entry name" value="PHOSPHOLIPASE A2"/>
    <property type="match status" value="1"/>
</dbReference>
<dbReference type="PANTHER" id="PTHR11716">
    <property type="entry name" value="PHOSPHOLIPASE A2 FAMILY MEMBER"/>
    <property type="match status" value="1"/>
</dbReference>
<dbReference type="Pfam" id="PF00068">
    <property type="entry name" value="Phospholip_A2_1"/>
    <property type="match status" value="1"/>
</dbReference>
<dbReference type="PRINTS" id="PR00389">
    <property type="entry name" value="PHPHLIPASEA2"/>
</dbReference>
<dbReference type="SMART" id="SM00085">
    <property type="entry name" value="PA2c"/>
    <property type="match status" value="1"/>
</dbReference>
<dbReference type="SUPFAM" id="SSF48619">
    <property type="entry name" value="Phospholipase A2, PLA2"/>
    <property type="match status" value="1"/>
</dbReference>
<dbReference type="PROSITE" id="PS00119">
    <property type="entry name" value="PA2_ASP"/>
    <property type="match status" value="1"/>
</dbReference>
<dbReference type="PROSITE" id="PS00118">
    <property type="entry name" value="PA2_HIS"/>
    <property type="match status" value="1"/>
</dbReference>
<organism>
    <name type="scientific">Bungarus multicinctus</name>
    <name type="common">Many-banded krait</name>
    <dbReference type="NCBI Taxonomy" id="8616"/>
    <lineage>
        <taxon>Eukaryota</taxon>
        <taxon>Metazoa</taxon>
        <taxon>Chordata</taxon>
        <taxon>Craniata</taxon>
        <taxon>Vertebrata</taxon>
        <taxon>Euteleostomi</taxon>
        <taxon>Lepidosauria</taxon>
        <taxon>Squamata</taxon>
        <taxon>Bifurcata</taxon>
        <taxon>Unidentata</taxon>
        <taxon>Episquamata</taxon>
        <taxon>Toxicofera</taxon>
        <taxon>Serpentes</taxon>
        <taxon>Colubroidea</taxon>
        <taxon>Elapidae</taxon>
        <taxon>Bungarinae</taxon>
        <taxon>Bungarus</taxon>
    </lineage>
</organism>
<sequence>MYPAHLLVLSAVCVSLLGAANIPPHPLNLINFMEMIRYTIPCEKTWGEYTNYGCYCGAGGSGRPIDALDRCCYVHDNCYGDAANIRDCNPKTQSYSYKLTKRTIICYGAAGTCARVVCDCDRTAALCFGDSEYIEGHKNIDTARFCQ</sequence>
<keyword id="KW-0106">Calcium</keyword>
<keyword id="KW-0903">Direct protein sequencing</keyword>
<keyword id="KW-1015">Disulfide bond</keyword>
<keyword id="KW-0378">Hydrolase</keyword>
<keyword id="KW-0442">Lipid degradation</keyword>
<keyword id="KW-0443">Lipid metabolism</keyword>
<keyword id="KW-0479">Metal-binding</keyword>
<keyword id="KW-0528">Neurotoxin</keyword>
<keyword id="KW-0638">Presynaptic neurotoxin</keyword>
<keyword id="KW-0964">Secreted</keyword>
<keyword id="KW-0732">Signal</keyword>
<keyword id="KW-0800">Toxin</keyword>
<feature type="signal peptide" evidence="3">
    <location>
        <begin position="1"/>
        <end position="19"/>
    </location>
</feature>
<feature type="propeptide" id="PRO_0000022839" evidence="8">
    <location>
        <begin position="20"/>
        <end position="27"/>
    </location>
</feature>
<feature type="chain" id="PRO_0000022840" description="Acidic phospholipase A2 beta-bungarotoxin A3 chain" evidence="6">
    <location>
        <begin position="28"/>
        <end position="147"/>
    </location>
</feature>
<feature type="active site" evidence="2">
    <location>
        <position position="75"/>
    </location>
</feature>
<feature type="active site" evidence="2">
    <location>
        <position position="121"/>
    </location>
</feature>
<feature type="binding site" evidence="1">
    <location>
        <position position="55"/>
    </location>
    <ligand>
        <name>Ca(2+)</name>
        <dbReference type="ChEBI" id="CHEBI:29108"/>
    </ligand>
</feature>
<feature type="binding site" evidence="1">
    <location>
        <position position="57"/>
    </location>
    <ligand>
        <name>Ca(2+)</name>
        <dbReference type="ChEBI" id="CHEBI:29108"/>
    </ligand>
</feature>
<feature type="binding site" evidence="1">
    <location>
        <position position="59"/>
    </location>
    <ligand>
        <name>Ca(2+)</name>
        <dbReference type="ChEBI" id="CHEBI:29108"/>
    </ligand>
</feature>
<feature type="binding site" evidence="1">
    <location>
        <position position="76"/>
    </location>
    <ligand>
        <name>Ca(2+)</name>
        <dbReference type="ChEBI" id="CHEBI:29108"/>
    </ligand>
</feature>
<feature type="disulfide bond" description="Interchain (with a B chain)">
    <location>
        <position position="42"/>
    </location>
</feature>
<feature type="disulfide bond" evidence="1">
    <location>
        <begin position="54"/>
        <end position="146"/>
    </location>
</feature>
<feature type="disulfide bond" evidence="1">
    <location>
        <begin position="56"/>
        <end position="72"/>
    </location>
</feature>
<feature type="disulfide bond" evidence="1">
    <location>
        <begin position="71"/>
        <end position="127"/>
    </location>
</feature>
<feature type="disulfide bond" evidence="1">
    <location>
        <begin position="78"/>
        <end position="120"/>
    </location>
</feature>
<feature type="disulfide bond" evidence="1">
    <location>
        <begin position="88"/>
        <end position="113"/>
    </location>
</feature>
<feature type="disulfide bond" evidence="1">
    <location>
        <begin position="106"/>
        <end position="118"/>
    </location>
</feature>
<feature type="sequence conflict" description="In Ref. 3; AA sequence." evidence="7" ref="3">
    <original>N</original>
    <variation>D</variation>
    <location>
        <position position="51"/>
    </location>
</feature>
<feature type="sequence conflict" description="In Ref. 3; AA sequence." evidence="7" ref="3">
    <original>AAN</original>
    <variation>DAA</variation>
    <location>
        <begin position="82"/>
        <end position="84"/>
    </location>
</feature>
<feature type="sequence conflict" description="In Ref. 3; AA sequence." evidence="7" ref="3">
    <original>QS</original>
    <variation>SQ</variation>
    <location>
        <begin position="93"/>
        <end position="94"/>
    </location>
</feature>
<feature type="sequence conflict" description="In Ref. 3; AA sequence." evidence="7" ref="3">
    <original>DSE</original>
    <variation>QSD</variation>
    <location>
        <begin position="130"/>
        <end position="132"/>
    </location>
</feature>
<reference key="1">
    <citation type="submission" date="1998-01" db="EMBL/GenBank/DDBJ databases">
        <title>Molecular cloning and expression of a new beta-bungarotoxin A chain from Bungarus multicinctus multicinctus.</title>
        <authorList>
            <person name="Qian Y.-C."/>
            <person name="Fang C.-Y."/>
            <person name="Gong Y."/>
            <person name="Yang S.-L."/>
        </authorList>
    </citation>
    <scope>NUCLEOTIDE SEQUENCE [MRNA]</scope>
    <source>
        <tissue>Venom gland</tissue>
    </source>
</reference>
<reference key="2">
    <citation type="journal article" date="2001" name="J. Protein Chem.">
        <title>Expression of A chain and B chain of beta-bungarotoxin from taiwan banded krait: the functional implication of the interchain disulfide bond between A chain and B chain.</title>
        <authorList>
            <person name="Wu P.-F."/>
            <person name="Chang L.-S."/>
        </authorList>
    </citation>
    <scope>NUCLEOTIDE SEQUENCE [MRNA] OF 11-147</scope>
    <source>
        <tissue>Venom gland</tissue>
    </source>
</reference>
<reference key="3">
    <citation type="journal article" date="1982" name="J. Biochem.">
        <title>Amino acid sequences of three beta-bungarotoxins (beta 3-, beta 4-, and beta 5-bungarotoxins) from Bungarus multicinctus venom. Amino acid substitutions in the A chains.</title>
        <authorList>
            <person name="Kondo K."/>
            <person name="Toda H."/>
            <person name="Narita K."/>
            <person name="Lee C.-Y."/>
        </authorList>
    </citation>
    <scope>PROTEIN SEQUENCE OF 28-147</scope>
    <scope>SUBCELLULAR LOCATION</scope>
    <scope>SUBUNIT</scope>
    <scope>TOXIC DOSE</scope>
    <source>
        <tissue>Venom</tissue>
    </source>
</reference>
<reference key="4">
    <citation type="journal article" date="2001" name="Toxicon">
        <title>What does beta-bungarotoxin do at the neuromuscular junction?</title>
        <authorList>
            <person name="Rowan E.G."/>
        </authorList>
    </citation>
    <scope>REVIEW</scope>
</reference>
<protein>
    <recommendedName>
        <fullName>Acidic phospholipase A2 beta-bungarotoxin A3 chain</fullName>
        <shortName>Beta-BuTX A3 chain</shortName>
        <shortName>svPLA2</shortName>
        <ecNumber>3.1.1.4</ecNumber>
    </recommendedName>
    <alternativeName>
        <fullName>Phosphatidylcholine 2-acylhydrolase</fullName>
    </alternativeName>
</protein>
<proteinExistence type="evidence at protein level"/>